<evidence type="ECO:0000255" key="1">
    <source>
        <dbReference type="HAMAP-Rule" id="MF_01849"/>
    </source>
</evidence>
<evidence type="ECO:0000255" key="2">
    <source>
        <dbReference type="PROSITE-ProRule" id="PRU01266"/>
    </source>
</evidence>
<keyword id="KW-0004">4Fe-4S</keyword>
<keyword id="KW-0963">Cytoplasm</keyword>
<keyword id="KW-1015">Disulfide bond</keyword>
<keyword id="KW-0408">Iron</keyword>
<keyword id="KW-0411">Iron-sulfur</keyword>
<keyword id="KW-0479">Metal-binding</keyword>
<keyword id="KW-0489">Methyltransferase</keyword>
<keyword id="KW-1185">Reference proteome</keyword>
<keyword id="KW-0698">rRNA processing</keyword>
<keyword id="KW-0949">S-adenosyl-L-methionine</keyword>
<keyword id="KW-0808">Transferase</keyword>
<keyword id="KW-0819">tRNA processing</keyword>
<name>RLMN_RIPO1</name>
<sequence length="340" mass="38248">MLVTEETLLGKSLDELTQWVEKQGQPTYRGKQLHQWLYEKGARSLDEISVFPKTWREKLINYPIGRSTIDYRTVAPDATRKYLLCLGDGLIIETVGIPTAKRLTVCVSSQVGCPMACDFCATGKGGYQRHLRAHEIVDQVLTVQEDFQRRVSHVVFMGMGEPLLNLEEVVKSVKILNQDIGIGQRSLTISTVGLPQKIIQLAHHHLQVTLAVSLHASNQPLRETLIPSAQHYTLKNLLADCREYVNITGRRISFEYVLLGGVNDLPEQAIELANLLKGFQSHVNLIPYNPIDEADYQRPNQTQIQTFVQVLEQHKIAVSVRYSRGLEANAACGQLRASQR</sequence>
<reference key="1">
    <citation type="journal article" date="2011" name="MBio">
        <title>Novel metabolic attributes of the genus Cyanothece, comprising a group of unicellular nitrogen-fixing Cyanobacteria.</title>
        <authorList>
            <person name="Bandyopadhyay A."/>
            <person name="Elvitigala T."/>
            <person name="Welsh E."/>
            <person name="Stockel J."/>
            <person name="Liberton M."/>
            <person name="Min H."/>
            <person name="Sherman L.A."/>
            <person name="Pakrasi H.B."/>
        </authorList>
    </citation>
    <scope>NUCLEOTIDE SEQUENCE [LARGE SCALE GENOMIC DNA]</scope>
    <source>
        <strain>PCC 8801 / RF-1</strain>
    </source>
</reference>
<organism>
    <name type="scientific">Rippkaea orientalis (strain PCC 8801 / RF-1)</name>
    <name type="common">Cyanothece sp. (strain PCC 8801)</name>
    <dbReference type="NCBI Taxonomy" id="41431"/>
    <lineage>
        <taxon>Bacteria</taxon>
        <taxon>Bacillati</taxon>
        <taxon>Cyanobacteriota</taxon>
        <taxon>Cyanophyceae</taxon>
        <taxon>Oscillatoriophycideae</taxon>
        <taxon>Chroococcales</taxon>
        <taxon>Aphanothecaceae</taxon>
        <taxon>Rippkaea</taxon>
        <taxon>Rippkaea orientalis</taxon>
    </lineage>
</organism>
<dbReference type="EC" id="2.1.1.192" evidence="1"/>
<dbReference type="EMBL" id="CP001287">
    <property type="protein sequence ID" value="ACK65499.1"/>
    <property type="molecule type" value="Genomic_DNA"/>
</dbReference>
<dbReference type="RefSeq" id="WP_012594772.1">
    <property type="nucleotide sequence ID" value="NC_011726.1"/>
</dbReference>
<dbReference type="SMR" id="B7K4N4"/>
<dbReference type="STRING" id="41431.PCC8801_1442"/>
<dbReference type="KEGG" id="cyp:PCC8801_1442"/>
<dbReference type="eggNOG" id="COG0820">
    <property type="taxonomic scope" value="Bacteria"/>
</dbReference>
<dbReference type="HOGENOM" id="CLU_029101_1_1_3"/>
<dbReference type="OrthoDB" id="9793973at2"/>
<dbReference type="Proteomes" id="UP000008204">
    <property type="component" value="Chromosome"/>
</dbReference>
<dbReference type="GO" id="GO:0005737">
    <property type="term" value="C:cytoplasm"/>
    <property type="evidence" value="ECO:0007669"/>
    <property type="project" value="UniProtKB-SubCell"/>
</dbReference>
<dbReference type="GO" id="GO:0051539">
    <property type="term" value="F:4 iron, 4 sulfur cluster binding"/>
    <property type="evidence" value="ECO:0007669"/>
    <property type="project" value="UniProtKB-UniRule"/>
</dbReference>
<dbReference type="GO" id="GO:0046872">
    <property type="term" value="F:metal ion binding"/>
    <property type="evidence" value="ECO:0007669"/>
    <property type="project" value="UniProtKB-KW"/>
</dbReference>
<dbReference type="GO" id="GO:0070040">
    <property type="term" value="F:rRNA (adenine(2503)-C2-)-methyltransferase activity"/>
    <property type="evidence" value="ECO:0007669"/>
    <property type="project" value="UniProtKB-UniRule"/>
</dbReference>
<dbReference type="GO" id="GO:0019843">
    <property type="term" value="F:rRNA binding"/>
    <property type="evidence" value="ECO:0007669"/>
    <property type="project" value="UniProtKB-UniRule"/>
</dbReference>
<dbReference type="GO" id="GO:0002935">
    <property type="term" value="F:tRNA (adenine(37)-C2)-methyltransferase activity"/>
    <property type="evidence" value="ECO:0007669"/>
    <property type="project" value="UniProtKB-UniRule"/>
</dbReference>
<dbReference type="GO" id="GO:0000049">
    <property type="term" value="F:tRNA binding"/>
    <property type="evidence" value="ECO:0007669"/>
    <property type="project" value="UniProtKB-UniRule"/>
</dbReference>
<dbReference type="GO" id="GO:0070475">
    <property type="term" value="P:rRNA base methylation"/>
    <property type="evidence" value="ECO:0007669"/>
    <property type="project" value="UniProtKB-UniRule"/>
</dbReference>
<dbReference type="GO" id="GO:0030488">
    <property type="term" value="P:tRNA methylation"/>
    <property type="evidence" value="ECO:0007669"/>
    <property type="project" value="UniProtKB-UniRule"/>
</dbReference>
<dbReference type="CDD" id="cd01335">
    <property type="entry name" value="Radical_SAM"/>
    <property type="match status" value="1"/>
</dbReference>
<dbReference type="FunFam" id="3.20.20.70:FF:000014">
    <property type="entry name" value="Probable dual-specificity RNA methyltransferase RlmN"/>
    <property type="match status" value="1"/>
</dbReference>
<dbReference type="Gene3D" id="1.10.150.530">
    <property type="match status" value="1"/>
</dbReference>
<dbReference type="Gene3D" id="3.20.20.70">
    <property type="entry name" value="Aldolase class I"/>
    <property type="match status" value="1"/>
</dbReference>
<dbReference type="HAMAP" id="MF_01849">
    <property type="entry name" value="RNA_methyltr_RlmN"/>
    <property type="match status" value="1"/>
</dbReference>
<dbReference type="InterPro" id="IPR013785">
    <property type="entry name" value="Aldolase_TIM"/>
</dbReference>
<dbReference type="InterPro" id="IPR040072">
    <property type="entry name" value="Methyltransferase_A"/>
</dbReference>
<dbReference type="InterPro" id="IPR048641">
    <property type="entry name" value="RlmN_N"/>
</dbReference>
<dbReference type="InterPro" id="IPR027492">
    <property type="entry name" value="RNA_MTrfase_RlmN"/>
</dbReference>
<dbReference type="InterPro" id="IPR004383">
    <property type="entry name" value="rRNA_lsu_MTrfase_RlmN/Cfr"/>
</dbReference>
<dbReference type="InterPro" id="IPR007197">
    <property type="entry name" value="rSAM"/>
</dbReference>
<dbReference type="NCBIfam" id="TIGR00048">
    <property type="entry name" value="rRNA_mod_RlmN"/>
    <property type="match status" value="1"/>
</dbReference>
<dbReference type="PANTHER" id="PTHR30544">
    <property type="entry name" value="23S RRNA METHYLTRANSFERASE"/>
    <property type="match status" value="1"/>
</dbReference>
<dbReference type="PANTHER" id="PTHR30544:SF5">
    <property type="entry name" value="RADICAL SAM CORE DOMAIN-CONTAINING PROTEIN"/>
    <property type="match status" value="1"/>
</dbReference>
<dbReference type="Pfam" id="PF04055">
    <property type="entry name" value="Radical_SAM"/>
    <property type="match status" value="1"/>
</dbReference>
<dbReference type="Pfam" id="PF21016">
    <property type="entry name" value="RlmN_N"/>
    <property type="match status" value="1"/>
</dbReference>
<dbReference type="PIRSF" id="PIRSF006004">
    <property type="entry name" value="CHP00048"/>
    <property type="match status" value="1"/>
</dbReference>
<dbReference type="SFLD" id="SFLDF00275">
    <property type="entry name" value="adenosine_C2_methyltransferase"/>
    <property type="match status" value="1"/>
</dbReference>
<dbReference type="SFLD" id="SFLDS00029">
    <property type="entry name" value="Radical_SAM"/>
    <property type="match status" value="1"/>
</dbReference>
<dbReference type="SUPFAM" id="SSF102114">
    <property type="entry name" value="Radical SAM enzymes"/>
    <property type="match status" value="1"/>
</dbReference>
<dbReference type="PROSITE" id="PS51918">
    <property type="entry name" value="RADICAL_SAM"/>
    <property type="match status" value="1"/>
</dbReference>
<proteinExistence type="inferred from homology"/>
<feature type="chain" id="PRO_1000188564" description="Probable dual-specificity RNA methyltransferase RlmN">
    <location>
        <begin position="1"/>
        <end position="340"/>
    </location>
</feature>
<feature type="domain" description="Radical SAM core" evidence="2">
    <location>
        <begin position="99"/>
        <end position="327"/>
    </location>
</feature>
<feature type="active site" description="Proton acceptor" evidence="1">
    <location>
        <position position="93"/>
    </location>
</feature>
<feature type="active site" description="S-methylcysteine intermediate" evidence="1">
    <location>
        <position position="332"/>
    </location>
</feature>
<feature type="binding site" evidence="1">
    <location>
        <position position="113"/>
    </location>
    <ligand>
        <name>[4Fe-4S] cluster</name>
        <dbReference type="ChEBI" id="CHEBI:49883"/>
        <note>4Fe-4S-S-AdoMet</note>
    </ligand>
</feature>
<feature type="binding site" evidence="1">
    <location>
        <position position="117"/>
    </location>
    <ligand>
        <name>[4Fe-4S] cluster</name>
        <dbReference type="ChEBI" id="CHEBI:49883"/>
        <note>4Fe-4S-S-AdoMet</note>
    </ligand>
</feature>
<feature type="binding site" evidence="1">
    <location>
        <position position="120"/>
    </location>
    <ligand>
        <name>[4Fe-4S] cluster</name>
        <dbReference type="ChEBI" id="CHEBI:49883"/>
        <note>4Fe-4S-S-AdoMet</note>
    </ligand>
</feature>
<feature type="binding site" evidence="1">
    <location>
        <begin position="160"/>
        <end position="161"/>
    </location>
    <ligand>
        <name>S-adenosyl-L-methionine</name>
        <dbReference type="ChEBI" id="CHEBI:59789"/>
    </ligand>
</feature>
<feature type="binding site" evidence="1">
    <location>
        <position position="190"/>
    </location>
    <ligand>
        <name>S-adenosyl-L-methionine</name>
        <dbReference type="ChEBI" id="CHEBI:59789"/>
    </ligand>
</feature>
<feature type="binding site" evidence="1">
    <location>
        <begin position="213"/>
        <end position="215"/>
    </location>
    <ligand>
        <name>S-adenosyl-L-methionine</name>
        <dbReference type="ChEBI" id="CHEBI:59789"/>
    </ligand>
</feature>
<feature type="binding site" evidence="1">
    <location>
        <position position="289"/>
    </location>
    <ligand>
        <name>S-adenosyl-L-methionine</name>
        <dbReference type="ChEBI" id="CHEBI:59789"/>
    </ligand>
</feature>
<feature type="disulfide bond" description="(transient)" evidence="1">
    <location>
        <begin position="106"/>
        <end position="332"/>
    </location>
</feature>
<accession>B7K4N4</accession>
<gene>
    <name evidence="1" type="primary">rlmN</name>
    <name type="ordered locus">PCC8801_1442</name>
</gene>
<comment type="function">
    <text evidence="1">Specifically methylates position 2 of adenine 2503 in 23S rRNA and position 2 of adenine 37 in tRNAs.</text>
</comment>
<comment type="catalytic activity">
    <reaction evidence="1">
        <text>adenosine(2503) in 23S rRNA + 2 reduced [2Fe-2S]-[ferredoxin] + 2 S-adenosyl-L-methionine = 2-methyladenosine(2503) in 23S rRNA + 5'-deoxyadenosine + L-methionine + 2 oxidized [2Fe-2S]-[ferredoxin] + S-adenosyl-L-homocysteine</text>
        <dbReference type="Rhea" id="RHEA:42916"/>
        <dbReference type="Rhea" id="RHEA-COMP:10000"/>
        <dbReference type="Rhea" id="RHEA-COMP:10001"/>
        <dbReference type="Rhea" id="RHEA-COMP:10152"/>
        <dbReference type="Rhea" id="RHEA-COMP:10282"/>
        <dbReference type="ChEBI" id="CHEBI:17319"/>
        <dbReference type="ChEBI" id="CHEBI:33737"/>
        <dbReference type="ChEBI" id="CHEBI:33738"/>
        <dbReference type="ChEBI" id="CHEBI:57844"/>
        <dbReference type="ChEBI" id="CHEBI:57856"/>
        <dbReference type="ChEBI" id="CHEBI:59789"/>
        <dbReference type="ChEBI" id="CHEBI:74411"/>
        <dbReference type="ChEBI" id="CHEBI:74497"/>
        <dbReference type="EC" id="2.1.1.192"/>
    </reaction>
</comment>
<comment type="catalytic activity">
    <reaction evidence="1">
        <text>adenosine(37) in tRNA + 2 reduced [2Fe-2S]-[ferredoxin] + 2 S-adenosyl-L-methionine = 2-methyladenosine(37) in tRNA + 5'-deoxyadenosine + L-methionine + 2 oxidized [2Fe-2S]-[ferredoxin] + S-adenosyl-L-homocysteine</text>
        <dbReference type="Rhea" id="RHEA:43332"/>
        <dbReference type="Rhea" id="RHEA-COMP:10000"/>
        <dbReference type="Rhea" id="RHEA-COMP:10001"/>
        <dbReference type="Rhea" id="RHEA-COMP:10162"/>
        <dbReference type="Rhea" id="RHEA-COMP:10485"/>
        <dbReference type="ChEBI" id="CHEBI:17319"/>
        <dbReference type="ChEBI" id="CHEBI:33737"/>
        <dbReference type="ChEBI" id="CHEBI:33738"/>
        <dbReference type="ChEBI" id="CHEBI:57844"/>
        <dbReference type="ChEBI" id="CHEBI:57856"/>
        <dbReference type="ChEBI" id="CHEBI:59789"/>
        <dbReference type="ChEBI" id="CHEBI:74411"/>
        <dbReference type="ChEBI" id="CHEBI:74497"/>
        <dbReference type="EC" id="2.1.1.192"/>
    </reaction>
</comment>
<comment type="cofactor">
    <cofactor evidence="1">
        <name>[4Fe-4S] cluster</name>
        <dbReference type="ChEBI" id="CHEBI:49883"/>
    </cofactor>
    <text evidence="1">Binds 1 [4Fe-4S] cluster. The cluster is coordinated with 3 cysteines and an exchangeable S-adenosyl-L-methionine.</text>
</comment>
<comment type="subcellular location">
    <subcellularLocation>
        <location evidence="1">Cytoplasm</location>
    </subcellularLocation>
</comment>
<comment type="miscellaneous">
    <text evidence="1">Reaction proceeds by a ping-pong mechanism involving intermediate methylation of a conserved cysteine residue.</text>
</comment>
<comment type="similarity">
    <text evidence="1">Belongs to the radical SAM superfamily. RlmN family.</text>
</comment>
<protein>
    <recommendedName>
        <fullName evidence="1">Probable dual-specificity RNA methyltransferase RlmN</fullName>
        <ecNumber evidence="1">2.1.1.192</ecNumber>
    </recommendedName>
    <alternativeName>
        <fullName evidence="1">23S rRNA (adenine(2503)-C(2))-methyltransferase</fullName>
    </alternativeName>
    <alternativeName>
        <fullName evidence="1">23S rRNA m2A2503 methyltransferase</fullName>
    </alternativeName>
    <alternativeName>
        <fullName evidence="1">Ribosomal RNA large subunit methyltransferase N</fullName>
    </alternativeName>
    <alternativeName>
        <fullName evidence="1">tRNA (adenine(37)-C(2))-methyltransferase</fullName>
    </alternativeName>
    <alternativeName>
        <fullName evidence="1">tRNA m2A37 methyltransferase</fullName>
    </alternativeName>
</protein>